<organism>
    <name type="scientific">Kluyveromyces lactis (strain ATCC 8585 / CBS 2359 / DSM 70799 / NBRC 1267 / NRRL Y-1140 / WM37)</name>
    <name type="common">Yeast</name>
    <name type="synonym">Candida sphaerica</name>
    <dbReference type="NCBI Taxonomy" id="284590"/>
    <lineage>
        <taxon>Eukaryota</taxon>
        <taxon>Fungi</taxon>
        <taxon>Dikarya</taxon>
        <taxon>Ascomycota</taxon>
        <taxon>Saccharomycotina</taxon>
        <taxon>Saccharomycetes</taxon>
        <taxon>Saccharomycetales</taxon>
        <taxon>Saccharomycetaceae</taxon>
        <taxon>Kluyveromyces</taxon>
    </lineage>
</organism>
<reference key="1">
    <citation type="journal article" date="2004" name="Nature">
        <title>Genome evolution in yeasts.</title>
        <authorList>
            <person name="Dujon B."/>
            <person name="Sherman D."/>
            <person name="Fischer G."/>
            <person name="Durrens P."/>
            <person name="Casaregola S."/>
            <person name="Lafontaine I."/>
            <person name="de Montigny J."/>
            <person name="Marck C."/>
            <person name="Neuveglise C."/>
            <person name="Talla E."/>
            <person name="Goffard N."/>
            <person name="Frangeul L."/>
            <person name="Aigle M."/>
            <person name="Anthouard V."/>
            <person name="Babour A."/>
            <person name="Barbe V."/>
            <person name="Barnay S."/>
            <person name="Blanchin S."/>
            <person name="Beckerich J.-M."/>
            <person name="Beyne E."/>
            <person name="Bleykasten C."/>
            <person name="Boisrame A."/>
            <person name="Boyer J."/>
            <person name="Cattolico L."/>
            <person name="Confanioleri F."/>
            <person name="de Daruvar A."/>
            <person name="Despons L."/>
            <person name="Fabre E."/>
            <person name="Fairhead C."/>
            <person name="Ferry-Dumazet H."/>
            <person name="Groppi A."/>
            <person name="Hantraye F."/>
            <person name="Hennequin C."/>
            <person name="Jauniaux N."/>
            <person name="Joyet P."/>
            <person name="Kachouri R."/>
            <person name="Kerrest A."/>
            <person name="Koszul R."/>
            <person name="Lemaire M."/>
            <person name="Lesur I."/>
            <person name="Ma L."/>
            <person name="Muller H."/>
            <person name="Nicaud J.-M."/>
            <person name="Nikolski M."/>
            <person name="Oztas S."/>
            <person name="Ozier-Kalogeropoulos O."/>
            <person name="Pellenz S."/>
            <person name="Potier S."/>
            <person name="Richard G.-F."/>
            <person name="Straub M.-L."/>
            <person name="Suleau A."/>
            <person name="Swennen D."/>
            <person name="Tekaia F."/>
            <person name="Wesolowski-Louvel M."/>
            <person name="Westhof E."/>
            <person name="Wirth B."/>
            <person name="Zeniou-Meyer M."/>
            <person name="Zivanovic Y."/>
            <person name="Bolotin-Fukuhara M."/>
            <person name="Thierry A."/>
            <person name="Bouchier C."/>
            <person name="Caudron B."/>
            <person name="Scarpelli C."/>
            <person name="Gaillardin C."/>
            <person name="Weissenbach J."/>
            <person name="Wincker P."/>
            <person name="Souciet J.-L."/>
        </authorList>
    </citation>
    <scope>NUCLEOTIDE SEQUENCE [LARGE SCALE GENOMIC DNA]</scope>
    <source>
        <strain>ATCC 8585 / CBS 2359 / DSM 70799 / NBRC 1267 / NRRL Y-1140 / WM37</strain>
    </source>
</reference>
<feature type="chain" id="PRO_0000232225" description="ATP-dependent RNA helicase DBP5">
    <location>
        <begin position="1"/>
        <end position="469"/>
    </location>
</feature>
<feature type="domain" description="Helicase ATP-binding" evidence="2">
    <location>
        <begin position="112"/>
        <end position="279"/>
    </location>
</feature>
<feature type="domain" description="Helicase C-terminal" evidence="3">
    <location>
        <begin position="290"/>
        <end position="459"/>
    </location>
</feature>
<feature type="region of interest" description="Disordered" evidence="4">
    <location>
        <begin position="1"/>
        <end position="50"/>
    </location>
</feature>
<feature type="short sequence motif" description="Q motif">
    <location>
        <begin position="79"/>
        <end position="107"/>
    </location>
</feature>
<feature type="short sequence motif" description="DEAD box">
    <location>
        <begin position="226"/>
        <end position="229"/>
    </location>
</feature>
<feature type="compositionally biased region" description="Basic and acidic residues" evidence="4">
    <location>
        <begin position="16"/>
        <end position="50"/>
    </location>
</feature>
<feature type="binding site" evidence="2">
    <location>
        <begin position="125"/>
        <end position="132"/>
    </location>
    <ligand>
        <name>ATP</name>
        <dbReference type="ChEBI" id="CHEBI:30616"/>
    </ligand>
</feature>
<comment type="function">
    <text evidence="1">ATP-dependent RNA helicase associated with the nuclear pore complex and essential for mRNA export from the nucleus. May participate in a terminal step of mRNA export through the removal of proteins that accompany mRNA through the nucleopore complex. May also be involved in early transcription (By similarity).</text>
</comment>
<comment type="catalytic activity">
    <reaction>
        <text>ATP + H2O = ADP + phosphate + H(+)</text>
        <dbReference type="Rhea" id="RHEA:13065"/>
        <dbReference type="ChEBI" id="CHEBI:15377"/>
        <dbReference type="ChEBI" id="CHEBI:15378"/>
        <dbReference type="ChEBI" id="CHEBI:30616"/>
        <dbReference type="ChEBI" id="CHEBI:43474"/>
        <dbReference type="ChEBI" id="CHEBI:456216"/>
        <dbReference type="EC" id="3.6.4.13"/>
    </reaction>
</comment>
<comment type="subunit">
    <text evidence="1">Associates with the nuclear pore complex.</text>
</comment>
<comment type="subcellular location">
    <subcellularLocation>
        <location evidence="1">Cytoplasm</location>
    </subcellularLocation>
    <subcellularLocation>
        <location>Nucleus</location>
        <location>Nuclear pore complex</location>
    </subcellularLocation>
    <subcellularLocation>
        <location evidence="1">Nucleus membrane</location>
        <topology evidence="1">Peripheral membrane protein</topology>
        <orientation evidence="1">Cytoplasmic side</orientation>
    </subcellularLocation>
    <text evidence="1">Nuclear pore complex cytoplasmic fibrils.</text>
</comment>
<comment type="domain">
    <text>The Q motif is unique to and characteristic of the DEAD box family of RNA helicases and controls ATP binding and hydrolysis.</text>
</comment>
<comment type="similarity">
    <text evidence="5">Belongs to the DEAD box helicase family. DDX19/DBP5 subfamily.</text>
</comment>
<protein>
    <recommendedName>
        <fullName>ATP-dependent RNA helicase DBP5</fullName>
        <ecNumber>3.6.4.13</ecNumber>
    </recommendedName>
</protein>
<gene>
    <name type="primary">DBP5</name>
    <name type="ordered locus">KLLA0F15950g</name>
</gene>
<proteinExistence type="inferred from homology"/>
<keyword id="KW-0067">ATP-binding</keyword>
<keyword id="KW-0963">Cytoplasm</keyword>
<keyword id="KW-0347">Helicase</keyword>
<keyword id="KW-0378">Hydrolase</keyword>
<keyword id="KW-0472">Membrane</keyword>
<keyword id="KW-0509">mRNA transport</keyword>
<keyword id="KW-0906">Nuclear pore complex</keyword>
<keyword id="KW-0547">Nucleotide-binding</keyword>
<keyword id="KW-0539">Nucleus</keyword>
<keyword id="KW-0653">Protein transport</keyword>
<keyword id="KW-1185">Reference proteome</keyword>
<keyword id="KW-0694">RNA-binding</keyword>
<keyword id="KW-0811">Translocation</keyword>
<keyword id="KW-0813">Transport</keyword>
<dbReference type="EC" id="3.6.4.13"/>
<dbReference type="EMBL" id="CR382126">
    <property type="protein sequence ID" value="CAG98506.1"/>
    <property type="molecule type" value="Genomic_DNA"/>
</dbReference>
<dbReference type="RefSeq" id="XP_455798.1">
    <property type="nucleotide sequence ID" value="XM_455798.1"/>
</dbReference>
<dbReference type="SMR" id="Q6CJU1"/>
<dbReference type="FunCoup" id="Q6CJU1">
    <property type="interactions" value="832"/>
</dbReference>
<dbReference type="STRING" id="284590.Q6CJU1"/>
<dbReference type="PaxDb" id="284590-Q6CJU1"/>
<dbReference type="KEGG" id="kla:KLLA0_F15950g"/>
<dbReference type="eggNOG" id="KOG0332">
    <property type="taxonomic scope" value="Eukaryota"/>
</dbReference>
<dbReference type="HOGENOM" id="CLU_003041_1_0_1"/>
<dbReference type="InParanoid" id="Q6CJU1"/>
<dbReference type="OMA" id="IAAETRW"/>
<dbReference type="Proteomes" id="UP000000598">
    <property type="component" value="Chromosome F"/>
</dbReference>
<dbReference type="GO" id="GO:0005737">
    <property type="term" value="C:cytoplasm"/>
    <property type="evidence" value="ECO:0007669"/>
    <property type="project" value="UniProtKB-SubCell"/>
</dbReference>
<dbReference type="GO" id="GO:0031965">
    <property type="term" value="C:nuclear membrane"/>
    <property type="evidence" value="ECO:0007669"/>
    <property type="project" value="UniProtKB-SubCell"/>
</dbReference>
<dbReference type="GO" id="GO:0005643">
    <property type="term" value="C:nuclear pore"/>
    <property type="evidence" value="ECO:0007669"/>
    <property type="project" value="UniProtKB-SubCell"/>
</dbReference>
<dbReference type="GO" id="GO:0005524">
    <property type="term" value="F:ATP binding"/>
    <property type="evidence" value="ECO:0007669"/>
    <property type="project" value="UniProtKB-KW"/>
</dbReference>
<dbReference type="GO" id="GO:0016887">
    <property type="term" value="F:ATP hydrolysis activity"/>
    <property type="evidence" value="ECO:0007669"/>
    <property type="project" value="RHEA"/>
</dbReference>
<dbReference type="GO" id="GO:0003723">
    <property type="term" value="F:RNA binding"/>
    <property type="evidence" value="ECO:0007669"/>
    <property type="project" value="UniProtKB-KW"/>
</dbReference>
<dbReference type="GO" id="GO:0003724">
    <property type="term" value="F:RNA helicase activity"/>
    <property type="evidence" value="ECO:0007669"/>
    <property type="project" value="UniProtKB-EC"/>
</dbReference>
<dbReference type="GO" id="GO:0051028">
    <property type="term" value="P:mRNA transport"/>
    <property type="evidence" value="ECO:0007669"/>
    <property type="project" value="UniProtKB-KW"/>
</dbReference>
<dbReference type="GO" id="GO:0015031">
    <property type="term" value="P:protein transport"/>
    <property type="evidence" value="ECO:0007669"/>
    <property type="project" value="UniProtKB-KW"/>
</dbReference>
<dbReference type="CDD" id="cd17963">
    <property type="entry name" value="DEADc_DDX19_DDX25"/>
    <property type="match status" value="1"/>
</dbReference>
<dbReference type="CDD" id="cd18787">
    <property type="entry name" value="SF2_C_DEAD"/>
    <property type="match status" value="1"/>
</dbReference>
<dbReference type="FunFam" id="3.40.50.300:FF:000849">
    <property type="entry name" value="ATP-dependent RNA helicase DBP5"/>
    <property type="match status" value="1"/>
</dbReference>
<dbReference type="FunFam" id="3.40.50.300:FF:000318">
    <property type="entry name" value="ATP-dependent RNA helicase DDX19B"/>
    <property type="match status" value="1"/>
</dbReference>
<dbReference type="Gene3D" id="3.40.50.300">
    <property type="entry name" value="P-loop containing nucleotide triphosphate hydrolases"/>
    <property type="match status" value="2"/>
</dbReference>
<dbReference type="InterPro" id="IPR011545">
    <property type="entry name" value="DEAD/DEAH_box_helicase_dom"/>
</dbReference>
<dbReference type="InterPro" id="IPR014001">
    <property type="entry name" value="Helicase_ATP-bd"/>
</dbReference>
<dbReference type="InterPro" id="IPR001650">
    <property type="entry name" value="Helicase_C-like"/>
</dbReference>
<dbReference type="InterPro" id="IPR027417">
    <property type="entry name" value="P-loop_NTPase"/>
</dbReference>
<dbReference type="InterPro" id="IPR000629">
    <property type="entry name" value="RNA-helicase_DEAD-box_CS"/>
</dbReference>
<dbReference type="InterPro" id="IPR014014">
    <property type="entry name" value="RNA_helicase_DEAD_Q_motif"/>
</dbReference>
<dbReference type="PANTHER" id="PTHR47958">
    <property type="entry name" value="ATP-DEPENDENT RNA HELICASE DBP3"/>
    <property type="match status" value="1"/>
</dbReference>
<dbReference type="Pfam" id="PF00270">
    <property type="entry name" value="DEAD"/>
    <property type="match status" value="1"/>
</dbReference>
<dbReference type="Pfam" id="PF00271">
    <property type="entry name" value="Helicase_C"/>
    <property type="match status" value="1"/>
</dbReference>
<dbReference type="SMART" id="SM00487">
    <property type="entry name" value="DEXDc"/>
    <property type="match status" value="1"/>
</dbReference>
<dbReference type="SMART" id="SM00490">
    <property type="entry name" value="HELICc"/>
    <property type="match status" value="1"/>
</dbReference>
<dbReference type="SUPFAM" id="SSF52540">
    <property type="entry name" value="P-loop containing nucleoside triphosphate hydrolases"/>
    <property type="match status" value="1"/>
</dbReference>
<dbReference type="PROSITE" id="PS00039">
    <property type="entry name" value="DEAD_ATP_HELICASE"/>
    <property type="match status" value="1"/>
</dbReference>
<dbReference type="PROSITE" id="PS51192">
    <property type="entry name" value="HELICASE_ATP_BIND_1"/>
    <property type="match status" value="1"/>
</dbReference>
<dbReference type="PROSITE" id="PS51194">
    <property type="entry name" value="HELICASE_CTER"/>
    <property type="match status" value="1"/>
</dbReference>
<dbReference type="PROSITE" id="PS51195">
    <property type="entry name" value="Q_MOTIF"/>
    <property type="match status" value="1"/>
</dbReference>
<name>DBP5_KLULA</name>
<evidence type="ECO:0000250" key="1"/>
<evidence type="ECO:0000255" key="2">
    <source>
        <dbReference type="PROSITE-ProRule" id="PRU00541"/>
    </source>
</evidence>
<evidence type="ECO:0000255" key="3">
    <source>
        <dbReference type="PROSITE-ProRule" id="PRU00542"/>
    </source>
</evidence>
<evidence type="ECO:0000256" key="4">
    <source>
        <dbReference type="SAM" id="MobiDB-lite"/>
    </source>
</evidence>
<evidence type="ECO:0000305" key="5"/>
<sequence length="469" mass="52126">MAQLSKEASDLMARLNIKEPAKKASEDNDTTSETKVEKEDAKETKAEEPANKVINSEYEVKVNLADLQADANSPLYSVKSFEELGLSEELLKGLYAMKFQKPSKIQEKALPLLIRDPPHNMIAQSQSGTGKTAAFSLTMLTRVDPNVNSTQAICLSPARELARQTLEVIQEMGKFTKTSSQLVVPDSFERNKPITANIVVGTPGTVLDLIRRKMLNLGSIKVFVLDEADNMLDKQGLGDQCIRVKKFLPKTCQLVLFSATFDDGVRQYAKKIIPTAVSLELQKNEVNVSAIKQLFMDCDNEEHKYTILSELYGLLTIGSSIIFVKTKQTANLLYAKLKKEGHQVSILHGDLQSQDRDRLIDDFREGRSKVLITTNVLARGIDIPSVSMVVNYDLPTLPNGQADPSTYVHRIGRTGRFGRTGVAISFIHDKKSFEVLSAIQKYFGDIEITKVPTDDLDEMETIVKKALKA</sequence>
<accession>Q6CJU1</accession>